<comment type="function">
    <text evidence="5">Catalyzes the dephosphorylation of histidinol-phosphate to histidinol, the direct precursor of histidine.</text>
</comment>
<comment type="catalytic activity">
    <reaction evidence="5">
        <text>L-histidinol phosphate + H2O = L-histidinol + phosphate</text>
        <dbReference type="Rhea" id="RHEA:14465"/>
        <dbReference type="ChEBI" id="CHEBI:15377"/>
        <dbReference type="ChEBI" id="CHEBI:43474"/>
        <dbReference type="ChEBI" id="CHEBI:57699"/>
        <dbReference type="ChEBI" id="CHEBI:57980"/>
        <dbReference type="EC" id="3.1.3.15"/>
    </reaction>
</comment>
<comment type="cofactor">
    <cofactor evidence="1">
        <name>Mg(2+)</name>
        <dbReference type="ChEBI" id="CHEBI:18420"/>
    </cofactor>
</comment>
<comment type="pathway">
    <text evidence="2">Amino-acid biosynthesis; L-histidine biosynthesis; L-histidine from 5-phospho-alpha-D-ribose 1-diphosphate: step 8/9.</text>
</comment>
<comment type="disruption phenotype">
    <text evidence="2">Cells lacking this gene exhibit an auxotrophy for histidine, but can grow on minimal medium supplemented with histidinol.</text>
</comment>
<comment type="similarity">
    <text evidence="4">Belongs to the inositol monophosphatase superfamily.</text>
</comment>
<accession>Q9K4B1</accession>
<protein>
    <recommendedName>
        <fullName>Histidinol-phosphatase</fullName>
        <shortName>HolPase</shortName>
        <ecNumber evidence="5">3.1.3.15</ecNumber>
    </recommendedName>
    <alternativeName>
        <fullName>Histidinol-phosphate phosphatase</fullName>
    </alternativeName>
</protein>
<name>HISN_STRCO</name>
<reference key="1">
    <citation type="journal article" date="2002" name="Nature">
        <title>Complete genome sequence of the model actinomycete Streptomyces coelicolor A3(2).</title>
        <authorList>
            <person name="Bentley S.D."/>
            <person name="Chater K.F."/>
            <person name="Cerdeno-Tarraga A.-M."/>
            <person name="Challis G.L."/>
            <person name="Thomson N.R."/>
            <person name="James K.D."/>
            <person name="Harris D.E."/>
            <person name="Quail M.A."/>
            <person name="Kieser H."/>
            <person name="Harper D."/>
            <person name="Bateman A."/>
            <person name="Brown S."/>
            <person name="Chandra G."/>
            <person name="Chen C.W."/>
            <person name="Collins M."/>
            <person name="Cronin A."/>
            <person name="Fraser A."/>
            <person name="Goble A."/>
            <person name="Hidalgo J."/>
            <person name="Hornsby T."/>
            <person name="Howarth S."/>
            <person name="Huang C.-H."/>
            <person name="Kieser T."/>
            <person name="Larke L."/>
            <person name="Murphy L.D."/>
            <person name="Oliver K."/>
            <person name="O'Neil S."/>
            <person name="Rabbinowitsch E."/>
            <person name="Rajandream M.A."/>
            <person name="Rutherford K.M."/>
            <person name="Rutter S."/>
            <person name="Seeger K."/>
            <person name="Saunders D."/>
            <person name="Sharp S."/>
            <person name="Squares R."/>
            <person name="Squares S."/>
            <person name="Taylor K."/>
            <person name="Warren T."/>
            <person name="Wietzorrek A."/>
            <person name="Woodward J.R."/>
            <person name="Barrell B.G."/>
            <person name="Parkhill J."/>
            <person name="Hopwood D.A."/>
        </authorList>
    </citation>
    <scope>NUCLEOTIDE SEQUENCE [LARGE SCALE GENOMIC DNA]</scope>
    <source>
        <strain>ATCC BAA-471 / A3(2) / M145</strain>
    </source>
</reference>
<reference key="2">
    <citation type="journal article" date="2008" name="Curr. Microbiol.">
        <title>The histidinol phosphate phosphatase involved in histidine biosynthetic pathway is encoded by SCO5208 (hisN) in Streptomyces coelicolor A3(2).</title>
        <authorList>
            <person name="Marineo S."/>
            <person name="Cusimano M.G."/>
            <person name="Limauro D."/>
            <person name="Coticchio G."/>
            <person name="Puglia A.M."/>
        </authorList>
    </citation>
    <scope>IDENTIFICATION</scope>
    <scope>FUNCTION IN HISTIDINE BIOSYNTHESIS</scope>
    <scope>PHOSPHATASE ACTIVITY</scope>
    <scope>GENE NAME</scope>
    <scope>PATHWAY</scope>
    <scope>DISRUPTION PHENOTYPE</scope>
    <scope>MUTAGENESIS OF GLY-118</scope>
    <source>
        <strain>ATCC BAA-471 / A3(2) / M145</strain>
    </source>
</reference>
<sequence length="266" mass="29084">MPDYLDDLRLAHVLADAADAATMDRFKALDLKVETKPDMTPVSEADKAAEELIRGHLSRARPRDSVHGEEFGVAGTGPRRWVIDPIDGTKNYVRGVPVWATLIALMEAKEGGYQPVVGLVSAPALGRRWWAVEDHGAFTGRSLTSAHRLHVSQVSTLSDASFAYSSLSGWEEQGRLDGFLDLTREVWRTRAYGDFWPYMMVAEGSVDLCAEPELSLWDMAANAIIVTEAGGTFTGLDGRPGPHSGNAAASNGRLHDELLGYLNQRY</sequence>
<organism>
    <name type="scientific">Streptomyces coelicolor (strain ATCC BAA-471 / A3(2) / M145)</name>
    <dbReference type="NCBI Taxonomy" id="100226"/>
    <lineage>
        <taxon>Bacteria</taxon>
        <taxon>Bacillati</taxon>
        <taxon>Actinomycetota</taxon>
        <taxon>Actinomycetes</taxon>
        <taxon>Kitasatosporales</taxon>
        <taxon>Streptomycetaceae</taxon>
        <taxon>Streptomyces</taxon>
        <taxon>Streptomyces albidoflavus group</taxon>
    </lineage>
</organism>
<keyword id="KW-0028">Amino-acid biosynthesis</keyword>
<keyword id="KW-0368">Histidine biosynthesis</keyword>
<keyword id="KW-0378">Hydrolase</keyword>
<keyword id="KW-0460">Magnesium</keyword>
<keyword id="KW-0479">Metal-binding</keyword>
<keyword id="KW-1185">Reference proteome</keyword>
<proteinExistence type="evidence at protein level"/>
<dbReference type="EC" id="3.1.3.15" evidence="5"/>
<dbReference type="EMBL" id="AL939122">
    <property type="protein sequence ID" value="CAB94593.1"/>
    <property type="molecule type" value="Genomic_DNA"/>
</dbReference>
<dbReference type="RefSeq" id="NP_629355.1">
    <property type="nucleotide sequence ID" value="NC_003888.3"/>
</dbReference>
<dbReference type="RefSeq" id="WP_003973764.1">
    <property type="nucleotide sequence ID" value="NZ_VNID01000008.1"/>
</dbReference>
<dbReference type="SMR" id="Q9K4B1"/>
<dbReference type="FunCoup" id="Q9K4B1">
    <property type="interactions" value="116"/>
</dbReference>
<dbReference type="STRING" id="100226.gene:17762859"/>
<dbReference type="PaxDb" id="100226-SCO5208"/>
<dbReference type="KEGG" id="sco:SCO5208"/>
<dbReference type="PATRIC" id="fig|100226.15.peg.5292"/>
<dbReference type="eggNOG" id="COG0483">
    <property type="taxonomic scope" value="Bacteria"/>
</dbReference>
<dbReference type="HOGENOM" id="CLU_044118_4_0_11"/>
<dbReference type="InParanoid" id="Q9K4B1"/>
<dbReference type="OrthoDB" id="9772456at2"/>
<dbReference type="PhylomeDB" id="Q9K4B1"/>
<dbReference type="UniPathway" id="UPA00031">
    <property type="reaction ID" value="UER00013"/>
</dbReference>
<dbReference type="Proteomes" id="UP000001973">
    <property type="component" value="Chromosome"/>
</dbReference>
<dbReference type="GO" id="GO:0004401">
    <property type="term" value="F:histidinol-phosphatase activity"/>
    <property type="evidence" value="ECO:0000315"/>
    <property type="project" value="UniProtKB"/>
</dbReference>
<dbReference type="GO" id="GO:0046872">
    <property type="term" value="F:metal ion binding"/>
    <property type="evidence" value="ECO:0007669"/>
    <property type="project" value="UniProtKB-KW"/>
</dbReference>
<dbReference type="GO" id="GO:0016791">
    <property type="term" value="F:phosphatase activity"/>
    <property type="evidence" value="ECO:0000314"/>
    <property type="project" value="UniProtKB"/>
</dbReference>
<dbReference type="GO" id="GO:0042578">
    <property type="term" value="F:phosphoric ester hydrolase activity"/>
    <property type="evidence" value="ECO:0000318"/>
    <property type="project" value="GO_Central"/>
</dbReference>
<dbReference type="GO" id="GO:0000105">
    <property type="term" value="P:L-histidine biosynthetic process"/>
    <property type="evidence" value="ECO:0000315"/>
    <property type="project" value="UniProtKB"/>
</dbReference>
<dbReference type="FunFam" id="3.40.190.80:FF:000010">
    <property type="entry name" value="Histidinol phosphatase"/>
    <property type="match status" value="1"/>
</dbReference>
<dbReference type="FunFam" id="3.30.540.10:FF:000003">
    <property type="entry name" value="Inositol-1-monophosphatase"/>
    <property type="match status" value="1"/>
</dbReference>
<dbReference type="Gene3D" id="3.40.190.80">
    <property type="match status" value="1"/>
</dbReference>
<dbReference type="Gene3D" id="3.30.540.10">
    <property type="entry name" value="Fructose-1,6-Bisphosphatase, subunit A, domain 1"/>
    <property type="match status" value="1"/>
</dbReference>
<dbReference type="InterPro" id="IPR011809">
    <property type="entry name" value="His_9_proposed"/>
</dbReference>
<dbReference type="InterPro" id="IPR020583">
    <property type="entry name" value="Inositol_monoP_metal-BS"/>
</dbReference>
<dbReference type="InterPro" id="IPR000760">
    <property type="entry name" value="Inositol_monophosphatase-like"/>
</dbReference>
<dbReference type="NCBIfam" id="TIGR02067">
    <property type="entry name" value="his_9_HisN"/>
    <property type="match status" value="1"/>
</dbReference>
<dbReference type="PANTHER" id="PTHR20854">
    <property type="entry name" value="INOSITOL MONOPHOSPHATASE"/>
    <property type="match status" value="1"/>
</dbReference>
<dbReference type="PANTHER" id="PTHR20854:SF4">
    <property type="entry name" value="INOSITOL-1-MONOPHOSPHATASE-RELATED"/>
    <property type="match status" value="1"/>
</dbReference>
<dbReference type="Pfam" id="PF00459">
    <property type="entry name" value="Inositol_P"/>
    <property type="match status" value="1"/>
</dbReference>
<dbReference type="PRINTS" id="PR00377">
    <property type="entry name" value="IMPHPHTASES"/>
</dbReference>
<dbReference type="SUPFAM" id="SSF56655">
    <property type="entry name" value="Carbohydrate phosphatase"/>
    <property type="match status" value="1"/>
</dbReference>
<dbReference type="PROSITE" id="PS00629">
    <property type="entry name" value="IMP_1"/>
    <property type="match status" value="1"/>
</dbReference>
<gene>
    <name evidence="3" type="primary">hisN</name>
    <name type="ordered locus">SCO5208</name>
    <name type="ORF">SC7E4.05c</name>
</gene>
<evidence type="ECO:0000250" key="1"/>
<evidence type="ECO:0000269" key="2">
    <source>
    </source>
</evidence>
<evidence type="ECO:0000303" key="3">
    <source>
    </source>
</evidence>
<evidence type="ECO:0000305" key="4"/>
<evidence type="ECO:0000305" key="5">
    <source>
    </source>
</evidence>
<feature type="chain" id="PRO_0000404325" description="Histidinol-phosphatase">
    <location>
        <begin position="1"/>
        <end position="266"/>
    </location>
</feature>
<feature type="binding site" evidence="1">
    <location>
        <position position="69"/>
    </location>
    <ligand>
        <name>Mg(2+)</name>
        <dbReference type="ChEBI" id="CHEBI:18420"/>
        <label>1</label>
    </ligand>
</feature>
<feature type="binding site" evidence="1">
    <location>
        <position position="69"/>
    </location>
    <ligand>
        <name>substrate</name>
    </ligand>
</feature>
<feature type="binding site" evidence="1">
    <location>
        <position position="84"/>
    </location>
    <ligand>
        <name>Mg(2+)</name>
        <dbReference type="ChEBI" id="CHEBI:18420"/>
        <label>1</label>
    </ligand>
</feature>
<feature type="binding site" evidence="1">
    <location>
        <position position="84"/>
    </location>
    <ligand>
        <name>Mg(2+)</name>
        <dbReference type="ChEBI" id="CHEBI:18420"/>
        <label>2</label>
    </ligand>
</feature>
<feature type="binding site" evidence="1">
    <location>
        <begin position="86"/>
        <end position="89"/>
    </location>
    <ligand>
        <name>substrate</name>
    </ligand>
</feature>
<feature type="binding site" evidence="1">
    <location>
        <position position="86"/>
    </location>
    <ligand>
        <name>Mg(2+)</name>
        <dbReference type="ChEBI" id="CHEBI:18420"/>
        <label>1</label>
    </ligand>
</feature>
<feature type="binding site" evidence="1">
    <location>
        <position position="87"/>
    </location>
    <ligand>
        <name>Mg(2+)</name>
        <dbReference type="ChEBI" id="CHEBI:18420"/>
        <label>2</label>
    </ligand>
</feature>
<feature type="binding site" evidence="1">
    <location>
        <position position="190"/>
    </location>
    <ligand>
        <name>substrate</name>
    </ligand>
</feature>
<feature type="binding site" evidence="1">
    <location>
        <position position="218"/>
    </location>
    <ligand>
        <name>Mg(2+)</name>
        <dbReference type="ChEBI" id="CHEBI:18420"/>
        <label>2</label>
    </ligand>
</feature>
<feature type="binding site" evidence="1">
    <location>
        <position position="218"/>
    </location>
    <ligand>
        <name>substrate</name>
    </ligand>
</feature>
<feature type="mutagenesis site" description="Requires histidine to grow." evidence="2">
    <original>G</original>
    <variation>R</variation>
    <location>
        <position position="118"/>
    </location>
</feature>